<organism>
    <name type="scientific">Triticum aestivum</name>
    <name type="common">Wheat</name>
    <dbReference type="NCBI Taxonomy" id="4565"/>
    <lineage>
        <taxon>Eukaryota</taxon>
        <taxon>Viridiplantae</taxon>
        <taxon>Streptophyta</taxon>
        <taxon>Embryophyta</taxon>
        <taxon>Tracheophyta</taxon>
        <taxon>Spermatophyta</taxon>
        <taxon>Magnoliopsida</taxon>
        <taxon>Liliopsida</taxon>
        <taxon>Poales</taxon>
        <taxon>Poaceae</taxon>
        <taxon>BOP clade</taxon>
        <taxon>Pooideae</taxon>
        <taxon>Triticodae</taxon>
        <taxon>Triticeae</taxon>
        <taxon>Triticinae</taxon>
        <taxon>Triticum</taxon>
    </lineage>
</organism>
<dbReference type="EMBL" id="M11077">
    <property type="protein sequence ID" value="AAA34285.1"/>
    <property type="molecule type" value="mRNA"/>
</dbReference>
<dbReference type="PIR" id="T06505">
    <property type="entry name" value="T06505"/>
</dbReference>
<dbReference type="STRING" id="4565.P04729"/>
<dbReference type="EnsemblPlants" id="TraesMAC1D03G00407810.1">
    <property type="protein sequence ID" value="TraesMAC1D03G00407810.1.CDS1"/>
    <property type="gene ID" value="TraesMAC1D03G00407810"/>
</dbReference>
<dbReference type="Gramene" id="TraesMAC1D03G00407810.1">
    <property type="protein sequence ID" value="TraesMAC1D03G00407810.1.CDS1"/>
    <property type="gene ID" value="TraesMAC1D03G00407810"/>
</dbReference>
<dbReference type="Proteomes" id="UP000019116">
    <property type="component" value="Unplaced"/>
</dbReference>
<dbReference type="GO" id="GO:0045735">
    <property type="term" value="F:nutrient reservoir activity"/>
    <property type="evidence" value="ECO:0007669"/>
    <property type="project" value="UniProtKB-KW"/>
</dbReference>
<dbReference type="Gene3D" id="1.10.110.10">
    <property type="entry name" value="Plant lipid-transfer and hydrophobic proteins"/>
    <property type="match status" value="1"/>
</dbReference>
<dbReference type="InterPro" id="IPR036312">
    <property type="entry name" value="Bifun_inhib/LTP/seed_sf"/>
</dbReference>
<dbReference type="InterPro" id="IPR016140">
    <property type="entry name" value="Bifunc_inhib/LTP/seed_store"/>
</dbReference>
<dbReference type="InterPro" id="IPR001954">
    <property type="entry name" value="Glia_glutenin"/>
</dbReference>
<dbReference type="PANTHER" id="PTHR33454:SF18">
    <property type="entry name" value="GLUTENIN, LOW MOLECULAR WEIGHT SUBUNIT"/>
    <property type="match status" value="1"/>
</dbReference>
<dbReference type="PANTHER" id="PTHR33454">
    <property type="entry name" value="PROLAMIN PPROL 14P"/>
    <property type="match status" value="1"/>
</dbReference>
<dbReference type="Pfam" id="PF13016">
    <property type="entry name" value="Gliadin"/>
    <property type="match status" value="1"/>
</dbReference>
<dbReference type="PRINTS" id="PR00208">
    <property type="entry name" value="GLIADGLUTEN"/>
</dbReference>
<dbReference type="PRINTS" id="PR00209">
    <property type="entry name" value="GLIADIN"/>
</dbReference>
<dbReference type="SMART" id="SM00499">
    <property type="entry name" value="AAI"/>
    <property type="match status" value="1"/>
</dbReference>
<dbReference type="SUPFAM" id="SSF47699">
    <property type="entry name" value="Bifunctional inhibitor/lipid-transfer protein/seed storage 2S albumin"/>
    <property type="match status" value="1"/>
</dbReference>
<feature type="signal peptide">
    <location>
        <begin position="1"/>
        <end position="23"/>
    </location>
</feature>
<feature type="chain" id="PRO_0000032278" description="Gamma-gliadin B-I">
    <location>
        <begin position="24"/>
        <end position="304"/>
    </location>
</feature>
<feature type="region of interest" description="Disordered" evidence="1">
    <location>
        <begin position="32"/>
        <end position="92"/>
    </location>
</feature>
<feature type="compositionally biased region" description="Low complexity" evidence="1">
    <location>
        <begin position="41"/>
        <end position="92"/>
    </location>
</feature>
<keyword id="KW-1185">Reference proteome</keyword>
<keyword id="KW-0677">Repeat</keyword>
<keyword id="KW-0708">Seed storage protein</keyword>
<keyword id="KW-0732">Signal</keyword>
<keyword id="KW-0758">Storage protein</keyword>
<evidence type="ECO:0000256" key="1">
    <source>
        <dbReference type="SAM" id="MobiDB-lite"/>
    </source>
</evidence>
<evidence type="ECO:0000305" key="2"/>
<comment type="function">
    <text>Gliadin is the major seed storage protein in wheat.</text>
</comment>
<comment type="miscellaneous">
    <text>The gamma-gliadins can be divided into 3 homology classes. Sequence divergence between the classes is due to single-base substitutions and to duplications or deletions within or near direct repeats.</text>
</comment>
<comment type="similarity">
    <text evidence="2">Belongs to the gliadin/glutenin family.</text>
</comment>
<sequence length="304" mass="34252">MKTFLVFALIAVVATSAIAQMETSCISGLERPWQQQPLPPQQSFSQQPPFSQQQQQPLPQQPSFSQQQPPFSQQQPILSQQPPFSQQQQPVLPQQSPFSQQQQLVLPPQQQQQQLVQQQIPIVQPSVLQQLNPCKVFLQQQCSPVAMPQRLARSQMWQQSSCHVMQQQCCQQLQQIPEQSRYEAIRAIIYSIILQEQQQGFVQPQQQQPQQSGQGVSQSQQQSQQQLGQCSFQQPQQQLGQQPQQQQQQQVLQGTFLQPHQIAHLEAVTSIALRTLPTMCSVNVPLYSATTSVPFGVGTGVGAY</sequence>
<accession>P04729</accession>
<proteinExistence type="evidence at transcript level"/>
<name>GDB1_WHEAT</name>
<protein>
    <recommendedName>
        <fullName>Gamma-gliadin B-I</fullName>
    </recommendedName>
</protein>
<reference key="1">
    <citation type="journal article" date="1985" name="J. Biol. Chem.">
        <title>Evolution and heterogeneity of the alpha-/beta-type and gamma-type gliadin DNA sequences.</title>
        <authorList>
            <person name="Okita T.W."/>
            <person name="Cheesbrough V."/>
            <person name="Reeves C.D."/>
        </authorList>
    </citation>
    <scope>NUCLEOTIDE SEQUENCE [MRNA]</scope>
</reference>